<gene>
    <name type="primary">lysE</name>
    <name type="ordered locus">CE1357</name>
</gene>
<comment type="function">
    <text evidence="1">Catalyzes the efflux of L-lysine.</text>
</comment>
<comment type="subcellular location">
    <subcellularLocation>
        <location evidence="1">Cell inner membrane</location>
        <topology evidence="2">Multi-pass membrane protein</topology>
    </subcellularLocation>
</comment>
<comment type="similarity">
    <text evidence="3">Belongs to the LysE/ArgO transporter (TC 2.A.75) family.</text>
</comment>
<comment type="sequence caution" evidence="3">
    <conflict type="erroneous initiation">
        <sequence resource="EMBL-CDS" id="BAB88827"/>
    </conflict>
    <text>Extended N-terminus.</text>
</comment>
<comment type="sequence caution" evidence="3">
    <conflict type="erroneous initiation">
        <sequence resource="EMBL-CDS" id="BAC18167"/>
    </conflict>
    <text>Extended N-terminus.</text>
</comment>
<name>LYSE_COREF</name>
<accession>Q8RQM4</accession>
<sequence length="228" mass="24374">MEIFVTGLLLGASLLLAIGPQNVLVIKQGIKREGITAVIIVCLLSDVVLFTLGTLGVGLISDTAPIILDILRWCGIAYLLWFAVMAARDALRARTEVTFVEHSEPVAAASASGGGVTTKQRPRLRITSGTRQVWVRPMLMAIVLTWLNPNAYLDAFVFIGGVGAQYGETGRWIFAAGAFAASLVWFPLVGYGAAALSRPLSSPRVWRWINIGVAVVLTGLAVKLILMG</sequence>
<evidence type="ECO:0000250" key="1">
    <source>
        <dbReference type="UniProtKB" id="P94633"/>
    </source>
</evidence>
<evidence type="ECO:0000255" key="2"/>
<evidence type="ECO:0000305" key="3"/>
<proteinExistence type="inferred from homology"/>
<reference key="1">
    <citation type="submission" date="2002-04" db="EMBL/GenBank/DDBJ databases">
        <title>lysG, lysE of Corynebacterium efficiens.</title>
        <authorList>
            <person name="Itaya H."/>
            <person name="Kimura E."/>
            <person name="Kawahara Y."/>
            <person name="Sugimoto S."/>
        </authorList>
    </citation>
    <scope>NUCLEOTIDE SEQUENCE [GENOMIC DNA]</scope>
    <source>
        <strain>DSM 44549 / YS-314 / AJ 12310 / JCM 11189 / NBRC 100395</strain>
    </source>
</reference>
<reference key="2">
    <citation type="journal article" date="2003" name="Genome Res.">
        <title>Comparative complete genome sequence analysis of the amino acid replacements responsible for the thermostability of Corynebacterium efficiens.</title>
        <authorList>
            <person name="Nishio Y."/>
            <person name="Nakamura Y."/>
            <person name="Kawarabayasi Y."/>
            <person name="Usuda Y."/>
            <person name="Kimura E."/>
            <person name="Sugimoto S."/>
            <person name="Matsui K."/>
            <person name="Yamagishi A."/>
            <person name="Kikuchi H."/>
            <person name="Ikeo K."/>
            <person name="Gojobori T."/>
        </authorList>
    </citation>
    <scope>NUCLEOTIDE SEQUENCE [LARGE SCALE GENOMIC DNA]</scope>
    <source>
        <strain>DSM 44549 / YS-314 / AJ 12310 / JCM 11189 / NBRC 100395</strain>
    </source>
</reference>
<feature type="chain" id="PRO_0000204156" description="Lysine exporter LysE">
    <location>
        <begin position="1"/>
        <end position="228"/>
    </location>
</feature>
<feature type="transmembrane region" description="Helical" evidence="2">
    <location>
        <begin position="3"/>
        <end position="23"/>
    </location>
</feature>
<feature type="transmembrane region" description="Helical" evidence="2">
    <location>
        <begin position="37"/>
        <end position="57"/>
    </location>
</feature>
<feature type="transmembrane region" description="Helical" evidence="2">
    <location>
        <begin position="66"/>
        <end position="86"/>
    </location>
</feature>
<feature type="transmembrane region" description="Helical" evidence="2">
    <location>
        <begin position="139"/>
        <end position="159"/>
    </location>
</feature>
<feature type="transmembrane region" description="Helical" evidence="2">
    <location>
        <begin position="172"/>
        <end position="192"/>
    </location>
</feature>
<feature type="transmembrane region" description="Helical" evidence="2">
    <location>
        <begin position="208"/>
        <end position="228"/>
    </location>
</feature>
<keyword id="KW-0029">Amino-acid transport</keyword>
<keyword id="KW-0997">Cell inner membrane</keyword>
<keyword id="KW-1003">Cell membrane</keyword>
<keyword id="KW-0472">Membrane</keyword>
<keyword id="KW-1185">Reference proteome</keyword>
<keyword id="KW-0812">Transmembrane</keyword>
<keyword id="KW-1133">Transmembrane helix</keyword>
<keyword id="KW-0813">Transport</keyword>
<dbReference type="EMBL" id="AB083133">
    <property type="protein sequence ID" value="BAB88827.1"/>
    <property type="status" value="ALT_INIT"/>
    <property type="molecule type" value="Genomic_DNA"/>
</dbReference>
<dbReference type="EMBL" id="BA000035">
    <property type="protein sequence ID" value="BAC18167.1"/>
    <property type="status" value="ALT_INIT"/>
    <property type="molecule type" value="Genomic_DNA"/>
</dbReference>
<dbReference type="RefSeq" id="WP_006769321.1">
    <property type="nucleotide sequence ID" value="NZ_GG700686.1"/>
</dbReference>
<dbReference type="RefSeq" id="WP_143758438.1">
    <property type="nucleotide sequence ID" value="NC_004369.1"/>
</dbReference>
<dbReference type="STRING" id="196164.gene:10741766"/>
<dbReference type="KEGG" id="cef:CE1357"/>
<dbReference type="eggNOG" id="COG1279">
    <property type="taxonomic scope" value="Bacteria"/>
</dbReference>
<dbReference type="HOGENOM" id="CLU_087840_0_0_11"/>
<dbReference type="OrthoDB" id="5638726at2"/>
<dbReference type="Proteomes" id="UP000001409">
    <property type="component" value="Chromosome"/>
</dbReference>
<dbReference type="GO" id="GO:0005886">
    <property type="term" value="C:plasma membrane"/>
    <property type="evidence" value="ECO:0007669"/>
    <property type="project" value="UniProtKB-SubCell"/>
</dbReference>
<dbReference type="GO" id="GO:0015171">
    <property type="term" value="F:amino acid transmembrane transporter activity"/>
    <property type="evidence" value="ECO:0007669"/>
    <property type="project" value="TreeGrafter"/>
</dbReference>
<dbReference type="InterPro" id="IPR001123">
    <property type="entry name" value="LeuE-type"/>
</dbReference>
<dbReference type="InterPro" id="IPR004777">
    <property type="entry name" value="Lys/arg_exporter"/>
</dbReference>
<dbReference type="NCBIfam" id="TIGR00948">
    <property type="entry name" value="2a75"/>
    <property type="match status" value="1"/>
</dbReference>
<dbReference type="PANTHER" id="PTHR30086">
    <property type="entry name" value="ARGININE EXPORTER PROTEIN ARGO"/>
    <property type="match status" value="1"/>
</dbReference>
<dbReference type="PANTHER" id="PTHR30086:SF20">
    <property type="entry name" value="ARGININE EXPORTER PROTEIN ARGO-RELATED"/>
    <property type="match status" value="1"/>
</dbReference>
<dbReference type="Pfam" id="PF01810">
    <property type="entry name" value="LysE"/>
    <property type="match status" value="1"/>
</dbReference>
<protein>
    <recommendedName>
        <fullName evidence="1">Lysine exporter LysE</fullName>
    </recommendedName>
</protein>
<organism>
    <name type="scientific">Corynebacterium efficiens (strain DSM 44549 / YS-314 / AJ 12310 / JCM 11189 / NBRC 100395)</name>
    <dbReference type="NCBI Taxonomy" id="196164"/>
    <lineage>
        <taxon>Bacteria</taxon>
        <taxon>Bacillati</taxon>
        <taxon>Actinomycetota</taxon>
        <taxon>Actinomycetes</taxon>
        <taxon>Mycobacteriales</taxon>
        <taxon>Corynebacteriaceae</taxon>
        <taxon>Corynebacterium</taxon>
    </lineage>
</organism>